<name>SYR_THIDA</name>
<proteinExistence type="inferred from homology"/>
<feature type="chain" id="PRO_0000242113" description="Arginine--tRNA ligase">
    <location>
        <begin position="1"/>
        <end position="557"/>
    </location>
</feature>
<feature type="short sequence motif" description="'HIGH' region">
    <location>
        <begin position="128"/>
        <end position="138"/>
    </location>
</feature>
<organism>
    <name type="scientific">Thiobacillus denitrificans (strain ATCC 25259 / T1)</name>
    <dbReference type="NCBI Taxonomy" id="292415"/>
    <lineage>
        <taxon>Bacteria</taxon>
        <taxon>Pseudomonadati</taxon>
        <taxon>Pseudomonadota</taxon>
        <taxon>Betaproteobacteria</taxon>
        <taxon>Nitrosomonadales</taxon>
        <taxon>Thiobacillaceae</taxon>
        <taxon>Thiobacillus</taxon>
    </lineage>
</organism>
<accession>Q3SF80</accession>
<gene>
    <name evidence="1" type="primary">argS</name>
    <name type="ordered locus">Tbd_2782</name>
</gene>
<keyword id="KW-0030">Aminoacyl-tRNA synthetase</keyword>
<keyword id="KW-0067">ATP-binding</keyword>
<keyword id="KW-0963">Cytoplasm</keyword>
<keyword id="KW-0436">Ligase</keyword>
<keyword id="KW-0547">Nucleotide-binding</keyword>
<keyword id="KW-0648">Protein biosynthesis</keyword>
<keyword id="KW-1185">Reference proteome</keyword>
<sequence length="557" mass="61607">MSSTHPLKDQLALLIEAALEALAPDAPVSLEIERPKNPTHGDFSSNAAMQLARPLKRNPRELAQLIVTELPASTLVAKADIAGAGFINFHLTPAAWHGIVRQVRTAGAQFGRAQRETPQRVLIEFVSANPTGPLHVGHGRQAALGDALCNLYAAQGWDVYREFYYNDAGVQIATLAASVQARARGLQPGDATWPEAAYNGDYIADIARDFLAGKTVKSDDREFTASGDVDDLDSIRQFAVAYLRHEQDLDLRAFAVHFDNYYLESSLYTDGRVDATVQRLVAAGKTYEQDGALWLRTTEYGDDKDRVMKKSDGTYTYFVPDVAYHIAKWERGFARAINIQGTDHHGTIARVRAGLQAASVGIPEGYPDYLLHTMVRVMRGGEEVKISKRAGSYVTLRDLIEWTSKDAVRFFLLSRKADTEYVFDIDLALARNNDNPVYYVQYAHARICRVFEEWSGDVATLADADLAPLEAAHELALMQRLAEYPETVASAARDLAPHLLVHYLQMLAGDFHAWYNAEKFLVADEATKRARLALADATRIVIVNGLALLGVDAPEKM</sequence>
<reference key="1">
    <citation type="journal article" date="2006" name="J. Bacteriol.">
        <title>The genome sequence of the obligately chemolithoautotrophic, facultatively anaerobic bacterium Thiobacillus denitrificans.</title>
        <authorList>
            <person name="Beller H.R."/>
            <person name="Chain P.S."/>
            <person name="Letain T.E."/>
            <person name="Chakicherla A."/>
            <person name="Larimer F.W."/>
            <person name="Richardson P.M."/>
            <person name="Coleman M.A."/>
            <person name="Wood A.P."/>
            <person name="Kelly D.P."/>
        </authorList>
    </citation>
    <scope>NUCLEOTIDE SEQUENCE [LARGE SCALE GENOMIC DNA]</scope>
    <source>
        <strain>ATCC 25259 / T1</strain>
    </source>
</reference>
<protein>
    <recommendedName>
        <fullName evidence="1">Arginine--tRNA ligase</fullName>
        <ecNumber evidence="1">6.1.1.19</ecNumber>
    </recommendedName>
    <alternativeName>
        <fullName evidence="1">Arginyl-tRNA synthetase</fullName>
        <shortName evidence="1">ArgRS</shortName>
    </alternativeName>
</protein>
<comment type="catalytic activity">
    <reaction evidence="1">
        <text>tRNA(Arg) + L-arginine + ATP = L-arginyl-tRNA(Arg) + AMP + diphosphate</text>
        <dbReference type="Rhea" id="RHEA:20301"/>
        <dbReference type="Rhea" id="RHEA-COMP:9658"/>
        <dbReference type="Rhea" id="RHEA-COMP:9673"/>
        <dbReference type="ChEBI" id="CHEBI:30616"/>
        <dbReference type="ChEBI" id="CHEBI:32682"/>
        <dbReference type="ChEBI" id="CHEBI:33019"/>
        <dbReference type="ChEBI" id="CHEBI:78442"/>
        <dbReference type="ChEBI" id="CHEBI:78513"/>
        <dbReference type="ChEBI" id="CHEBI:456215"/>
        <dbReference type="EC" id="6.1.1.19"/>
    </reaction>
</comment>
<comment type="subunit">
    <text evidence="1">Monomer.</text>
</comment>
<comment type="subcellular location">
    <subcellularLocation>
        <location evidence="1">Cytoplasm</location>
    </subcellularLocation>
</comment>
<comment type="similarity">
    <text evidence="1">Belongs to the class-I aminoacyl-tRNA synthetase family.</text>
</comment>
<dbReference type="EC" id="6.1.1.19" evidence="1"/>
<dbReference type="EMBL" id="CP000116">
    <property type="protein sequence ID" value="AAZ98735.1"/>
    <property type="molecule type" value="Genomic_DNA"/>
</dbReference>
<dbReference type="RefSeq" id="WP_011313294.1">
    <property type="nucleotide sequence ID" value="NC_007404.1"/>
</dbReference>
<dbReference type="SMR" id="Q3SF80"/>
<dbReference type="STRING" id="292415.Tbd_2782"/>
<dbReference type="KEGG" id="tbd:Tbd_2782"/>
<dbReference type="eggNOG" id="COG0018">
    <property type="taxonomic scope" value="Bacteria"/>
</dbReference>
<dbReference type="HOGENOM" id="CLU_006406_0_1_4"/>
<dbReference type="OrthoDB" id="9803211at2"/>
<dbReference type="Proteomes" id="UP000008291">
    <property type="component" value="Chromosome"/>
</dbReference>
<dbReference type="GO" id="GO:0005737">
    <property type="term" value="C:cytoplasm"/>
    <property type="evidence" value="ECO:0007669"/>
    <property type="project" value="UniProtKB-SubCell"/>
</dbReference>
<dbReference type="GO" id="GO:0004814">
    <property type="term" value="F:arginine-tRNA ligase activity"/>
    <property type="evidence" value="ECO:0007669"/>
    <property type="project" value="UniProtKB-UniRule"/>
</dbReference>
<dbReference type="GO" id="GO:0005524">
    <property type="term" value="F:ATP binding"/>
    <property type="evidence" value="ECO:0007669"/>
    <property type="project" value="UniProtKB-UniRule"/>
</dbReference>
<dbReference type="GO" id="GO:0006420">
    <property type="term" value="P:arginyl-tRNA aminoacylation"/>
    <property type="evidence" value="ECO:0007669"/>
    <property type="project" value="UniProtKB-UniRule"/>
</dbReference>
<dbReference type="CDD" id="cd07956">
    <property type="entry name" value="Anticodon_Ia_Arg"/>
    <property type="match status" value="1"/>
</dbReference>
<dbReference type="CDD" id="cd00671">
    <property type="entry name" value="ArgRS_core"/>
    <property type="match status" value="1"/>
</dbReference>
<dbReference type="FunFam" id="1.10.730.10:FF:000008">
    <property type="entry name" value="Arginine--tRNA ligase"/>
    <property type="match status" value="1"/>
</dbReference>
<dbReference type="FunFam" id="3.40.50.620:FF:000062">
    <property type="entry name" value="Arginine--tRNA ligase"/>
    <property type="match status" value="1"/>
</dbReference>
<dbReference type="Gene3D" id="3.30.1360.70">
    <property type="entry name" value="Arginyl tRNA synthetase N-terminal domain"/>
    <property type="match status" value="1"/>
</dbReference>
<dbReference type="Gene3D" id="3.40.50.620">
    <property type="entry name" value="HUPs"/>
    <property type="match status" value="1"/>
</dbReference>
<dbReference type="Gene3D" id="1.10.730.10">
    <property type="entry name" value="Isoleucyl-tRNA Synthetase, Domain 1"/>
    <property type="match status" value="1"/>
</dbReference>
<dbReference type="HAMAP" id="MF_00123">
    <property type="entry name" value="Arg_tRNA_synth"/>
    <property type="match status" value="1"/>
</dbReference>
<dbReference type="InterPro" id="IPR001412">
    <property type="entry name" value="aa-tRNA-synth_I_CS"/>
</dbReference>
<dbReference type="InterPro" id="IPR001278">
    <property type="entry name" value="Arg-tRNA-ligase"/>
</dbReference>
<dbReference type="InterPro" id="IPR005148">
    <property type="entry name" value="Arg-tRNA-synth_N"/>
</dbReference>
<dbReference type="InterPro" id="IPR036695">
    <property type="entry name" value="Arg-tRNA-synth_N_sf"/>
</dbReference>
<dbReference type="InterPro" id="IPR035684">
    <property type="entry name" value="ArgRS_core"/>
</dbReference>
<dbReference type="InterPro" id="IPR008909">
    <property type="entry name" value="DALR_anticod-bd"/>
</dbReference>
<dbReference type="InterPro" id="IPR014729">
    <property type="entry name" value="Rossmann-like_a/b/a_fold"/>
</dbReference>
<dbReference type="InterPro" id="IPR009080">
    <property type="entry name" value="tRNAsynth_Ia_anticodon-bd"/>
</dbReference>
<dbReference type="NCBIfam" id="TIGR00456">
    <property type="entry name" value="argS"/>
    <property type="match status" value="1"/>
</dbReference>
<dbReference type="PANTHER" id="PTHR11956:SF5">
    <property type="entry name" value="ARGININE--TRNA LIGASE, CYTOPLASMIC"/>
    <property type="match status" value="1"/>
</dbReference>
<dbReference type="PANTHER" id="PTHR11956">
    <property type="entry name" value="ARGINYL-TRNA SYNTHETASE"/>
    <property type="match status" value="1"/>
</dbReference>
<dbReference type="Pfam" id="PF03485">
    <property type="entry name" value="Arg_tRNA_synt_N"/>
    <property type="match status" value="1"/>
</dbReference>
<dbReference type="Pfam" id="PF05746">
    <property type="entry name" value="DALR_1"/>
    <property type="match status" value="1"/>
</dbReference>
<dbReference type="Pfam" id="PF00750">
    <property type="entry name" value="tRNA-synt_1d"/>
    <property type="match status" value="1"/>
</dbReference>
<dbReference type="PRINTS" id="PR01038">
    <property type="entry name" value="TRNASYNTHARG"/>
</dbReference>
<dbReference type="SMART" id="SM01016">
    <property type="entry name" value="Arg_tRNA_synt_N"/>
    <property type="match status" value="1"/>
</dbReference>
<dbReference type="SMART" id="SM00836">
    <property type="entry name" value="DALR_1"/>
    <property type="match status" value="1"/>
</dbReference>
<dbReference type="SUPFAM" id="SSF47323">
    <property type="entry name" value="Anticodon-binding domain of a subclass of class I aminoacyl-tRNA synthetases"/>
    <property type="match status" value="1"/>
</dbReference>
<dbReference type="SUPFAM" id="SSF55190">
    <property type="entry name" value="Arginyl-tRNA synthetase (ArgRS), N-terminal 'additional' domain"/>
    <property type="match status" value="1"/>
</dbReference>
<dbReference type="SUPFAM" id="SSF52374">
    <property type="entry name" value="Nucleotidylyl transferase"/>
    <property type="match status" value="1"/>
</dbReference>
<dbReference type="PROSITE" id="PS00178">
    <property type="entry name" value="AA_TRNA_LIGASE_I"/>
    <property type="match status" value="1"/>
</dbReference>
<evidence type="ECO:0000255" key="1">
    <source>
        <dbReference type="HAMAP-Rule" id="MF_00123"/>
    </source>
</evidence>